<evidence type="ECO:0000255" key="1"/>
<evidence type="ECO:0000255" key="2">
    <source>
        <dbReference type="PROSITE-ProRule" id="PRU00227"/>
    </source>
</evidence>
<evidence type="ECO:0000269" key="3">
    <source>
    </source>
</evidence>
<evidence type="ECO:0000269" key="4">
    <source>
    </source>
</evidence>
<evidence type="ECO:0000269" key="5">
    <source>
    </source>
</evidence>
<evidence type="ECO:0000303" key="6">
    <source>
    </source>
</evidence>
<evidence type="ECO:0000303" key="7">
    <source>
    </source>
</evidence>
<dbReference type="EMBL" id="CP017625">
    <property type="protein sequence ID" value="AOW28784.1"/>
    <property type="molecule type" value="Genomic_DNA"/>
</dbReference>
<dbReference type="RefSeq" id="XP_710938.1">
    <property type="nucleotide sequence ID" value="XM_705846.1"/>
</dbReference>
<dbReference type="STRING" id="237561.Q59MJ1"/>
<dbReference type="EnsemblFungi" id="C3_07860C_A-T">
    <property type="protein sequence ID" value="C3_07860C_A-T-p1"/>
    <property type="gene ID" value="C3_07860C_A"/>
</dbReference>
<dbReference type="GeneID" id="3647468"/>
<dbReference type="KEGG" id="cal:CAALFM_C307860CA"/>
<dbReference type="CGD" id="CAL0000180700">
    <property type="gene designation" value="MRR2"/>
</dbReference>
<dbReference type="VEuPathDB" id="FungiDB:C3_07860C_A"/>
<dbReference type="HOGENOM" id="CLU_334333_0_0_1"/>
<dbReference type="InParanoid" id="Q59MJ1"/>
<dbReference type="OMA" id="CATFTIH"/>
<dbReference type="OrthoDB" id="4159781at2759"/>
<dbReference type="Proteomes" id="UP000000559">
    <property type="component" value="Chromosome 3"/>
</dbReference>
<dbReference type="GO" id="GO:0016020">
    <property type="term" value="C:membrane"/>
    <property type="evidence" value="ECO:0007669"/>
    <property type="project" value="UniProtKB-SubCell"/>
</dbReference>
<dbReference type="GO" id="GO:0005634">
    <property type="term" value="C:nucleus"/>
    <property type="evidence" value="ECO:0000318"/>
    <property type="project" value="GO_Central"/>
</dbReference>
<dbReference type="GO" id="GO:0001228">
    <property type="term" value="F:DNA-binding transcription activator activity, RNA polymerase II-specific"/>
    <property type="evidence" value="ECO:0000318"/>
    <property type="project" value="GO_Central"/>
</dbReference>
<dbReference type="GO" id="GO:0003700">
    <property type="term" value="F:DNA-binding transcription factor activity"/>
    <property type="evidence" value="ECO:0000266"/>
    <property type="project" value="CGD"/>
</dbReference>
<dbReference type="GO" id="GO:0000978">
    <property type="term" value="F:RNA polymerase II cis-regulatory region sequence-specific DNA binding"/>
    <property type="evidence" value="ECO:0000318"/>
    <property type="project" value="GO_Central"/>
</dbReference>
<dbReference type="GO" id="GO:0008270">
    <property type="term" value="F:zinc ion binding"/>
    <property type="evidence" value="ECO:0007669"/>
    <property type="project" value="InterPro"/>
</dbReference>
<dbReference type="GO" id="GO:0051701">
    <property type="term" value="P:biological process involved in interaction with host"/>
    <property type="evidence" value="ECO:0000315"/>
    <property type="project" value="CGD"/>
</dbReference>
<dbReference type="GO" id="GO:0006351">
    <property type="term" value="P:DNA-templated transcription"/>
    <property type="evidence" value="ECO:0007669"/>
    <property type="project" value="InterPro"/>
</dbReference>
<dbReference type="GO" id="GO:1900189">
    <property type="term" value="P:positive regulation of cell adhesion involved in single-species biofilm formation"/>
    <property type="evidence" value="ECO:0000315"/>
    <property type="project" value="CGD"/>
</dbReference>
<dbReference type="GO" id="GO:0010811">
    <property type="term" value="P:positive regulation of cell-substrate adhesion"/>
    <property type="evidence" value="ECO:0000315"/>
    <property type="project" value="CGD"/>
</dbReference>
<dbReference type="GO" id="GO:2001040">
    <property type="term" value="P:positive regulation of cellular response to drug"/>
    <property type="evidence" value="ECO:0000315"/>
    <property type="project" value="CGD"/>
</dbReference>
<dbReference type="GO" id="GO:0006355">
    <property type="term" value="P:regulation of DNA-templated transcription"/>
    <property type="evidence" value="ECO:0000266"/>
    <property type="project" value="CGD"/>
</dbReference>
<dbReference type="GO" id="GO:0006357">
    <property type="term" value="P:regulation of transcription by RNA polymerase II"/>
    <property type="evidence" value="ECO:0000315"/>
    <property type="project" value="CGD"/>
</dbReference>
<dbReference type="GO" id="GO:0044011">
    <property type="term" value="P:single-species biofilm formation on inanimate substrate"/>
    <property type="evidence" value="ECO:0000315"/>
    <property type="project" value="CGD"/>
</dbReference>
<dbReference type="CDD" id="cd12148">
    <property type="entry name" value="fungal_TF_MHR"/>
    <property type="match status" value="1"/>
</dbReference>
<dbReference type="CDD" id="cd00067">
    <property type="entry name" value="GAL4"/>
    <property type="match status" value="1"/>
</dbReference>
<dbReference type="FunFam" id="4.10.240.10:FF:000082">
    <property type="entry name" value="Zn(II)2Cys6 transcription factor"/>
    <property type="match status" value="1"/>
</dbReference>
<dbReference type="Gene3D" id="4.10.240.10">
    <property type="entry name" value="Zn(2)-C6 fungal-type DNA-binding domain"/>
    <property type="match status" value="1"/>
</dbReference>
<dbReference type="InterPro" id="IPR051430">
    <property type="entry name" value="Fungal_TF_Env_Response"/>
</dbReference>
<dbReference type="InterPro" id="IPR007219">
    <property type="entry name" value="Transcription_factor_dom_fun"/>
</dbReference>
<dbReference type="InterPro" id="IPR036864">
    <property type="entry name" value="Zn2-C6_fun-type_DNA-bd_sf"/>
</dbReference>
<dbReference type="InterPro" id="IPR001138">
    <property type="entry name" value="Zn2Cys6_DnaBD"/>
</dbReference>
<dbReference type="PANTHER" id="PTHR31944">
    <property type="entry name" value="HEME-RESPONSIVE ZINC FINGER TRANSCRIPTION FACTOR HAP1"/>
    <property type="match status" value="1"/>
</dbReference>
<dbReference type="PANTHER" id="PTHR31944:SF131">
    <property type="entry name" value="HEME-RESPONSIVE ZINC FINGER TRANSCRIPTION FACTOR HAP1"/>
    <property type="match status" value="1"/>
</dbReference>
<dbReference type="Pfam" id="PF04082">
    <property type="entry name" value="Fungal_trans"/>
    <property type="match status" value="1"/>
</dbReference>
<dbReference type="Pfam" id="PF00172">
    <property type="entry name" value="Zn_clus"/>
    <property type="match status" value="1"/>
</dbReference>
<dbReference type="SMART" id="SM00066">
    <property type="entry name" value="GAL4"/>
    <property type="match status" value="1"/>
</dbReference>
<dbReference type="SUPFAM" id="SSF57701">
    <property type="entry name" value="Zn2/Cys6 DNA-binding domain"/>
    <property type="match status" value="1"/>
</dbReference>
<dbReference type="PROSITE" id="PS00463">
    <property type="entry name" value="ZN2_CY6_FUNGAL_1"/>
    <property type="match status" value="1"/>
</dbReference>
<dbReference type="PROSITE" id="PS50048">
    <property type="entry name" value="ZN2_CY6_FUNGAL_2"/>
    <property type="match status" value="1"/>
</dbReference>
<protein>
    <recommendedName>
        <fullName evidence="7">multidrug resistance regulator 2</fullName>
    </recommendedName>
</protein>
<gene>
    <name evidence="7" type="primary">MRR2</name>
    <name evidence="6" type="synonym">ZCF34</name>
    <name type="ordered locus">CAALFM_C307860CA</name>
    <name type="ORF">CaO19.6182</name>
</gene>
<accession>Q59MJ1</accession>
<accession>A0A1D8PKW3</accession>
<reference key="1">
    <citation type="journal article" date="2004" name="Proc. Natl. Acad. Sci. U.S.A.">
        <title>The diploid genome sequence of Candida albicans.</title>
        <authorList>
            <person name="Jones T."/>
            <person name="Federspiel N.A."/>
            <person name="Chibana H."/>
            <person name="Dungan J."/>
            <person name="Kalman S."/>
            <person name="Magee B.B."/>
            <person name="Newport G."/>
            <person name="Thorstenson Y.R."/>
            <person name="Agabian N."/>
            <person name="Magee P.T."/>
            <person name="Davis R.W."/>
            <person name="Scherer S."/>
        </authorList>
    </citation>
    <scope>NUCLEOTIDE SEQUENCE [LARGE SCALE GENOMIC DNA]</scope>
    <source>
        <strain>SC5314 / ATCC MYA-2876</strain>
    </source>
</reference>
<reference key="2">
    <citation type="journal article" date="2007" name="Genome Biol.">
        <title>Assembly of the Candida albicans genome into sixteen supercontigs aligned on the eight chromosomes.</title>
        <authorList>
            <person name="van het Hoog M."/>
            <person name="Rast T.J."/>
            <person name="Martchenko M."/>
            <person name="Grindle S."/>
            <person name="Dignard D."/>
            <person name="Hogues H."/>
            <person name="Cuomo C."/>
            <person name="Berriman M."/>
            <person name="Scherer S."/>
            <person name="Magee B.B."/>
            <person name="Whiteway M."/>
            <person name="Chibana H."/>
            <person name="Nantel A."/>
            <person name="Magee P.T."/>
        </authorList>
    </citation>
    <scope>GENOME REANNOTATION</scope>
    <source>
        <strain>SC5314 / ATCC MYA-2876</strain>
    </source>
</reference>
<reference key="3">
    <citation type="journal article" date="2013" name="Genome Biol.">
        <title>Assembly of a phased diploid Candida albicans genome facilitates allele-specific measurements and provides a simple model for repeat and indel structure.</title>
        <authorList>
            <person name="Muzzey D."/>
            <person name="Schwartz K."/>
            <person name="Weissman J.S."/>
            <person name="Sherlock G."/>
        </authorList>
    </citation>
    <scope>NUCLEOTIDE SEQUENCE [LARGE SCALE GENOMIC DNA]</scope>
    <scope>GENOME REANNOTATION</scope>
    <source>
        <strain>SC5314 / ATCC MYA-2876</strain>
    </source>
</reference>
<reference key="4">
    <citation type="journal article" date="2005" name="Comp. Funct. Genomics">
        <title>In silico analysis for transcription factors with Zn(II)(2)C(6) binuclear cluster DNA-binding domains in Candida albicans.</title>
        <authorList>
            <person name="Maicas S."/>
            <person name="Moreno I."/>
            <person name="Nieto A."/>
            <person name="Gomez M."/>
            <person name="Sentandreu R."/>
            <person name="Valentin E."/>
        </authorList>
    </citation>
    <scope>IDENTIFICATION</scope>
</reference>
<reference key="5">
    <citation type="journal article" date="2011" name="PLoS ONE">
        <title>In vivo systematic analysis of Candida albicans Zn2-Cys6 transcription factors mutants for mice organ colonization.</title>
        <authorList>
            <person name="Vandeputte P."/>
            <person name="Ischer F."/>
            <person name="Sanglard D."/>
            <person name="Coste A.T."/>
        </authorList>
    </citation>
    <scope>IDENTIFICATION</scope>
    <scope>FUNCTION</scope>
    <scope>DISRUPTION PHENOTYPE</scope>
</reference>
<reference key="6">
    <citation type="journal article" date="2012" name="PLoS Pathog.">
        <title>Portrait of Candida albicans adherence regulators.</title>
        <authorList>
            <person name="Finkel J.S."/>
            <person name="Xu W."/>
            <person name="Huang D."/>
            <person name="Hill E.M."/>
            <person name="Desai J.V."/>
            <person name="Woolford C.A."/>
            <person name="Nett J.E."/>
            <person name="Taff H."/>
            <person name="Norice C.T."/>
            <person name="Andes D.R."/>
            <person name="Lanni F."/>
            <person name="Mitchell A.P."/>
        </authorList>
    </citation>
    <scope>FUNCTION</scope>
    <scope>DISRUPTION PHENOTYPE</scope>
</reference>
<reference key="7">
    <citation type="journal article" date="2013" name="Mol. Microbiol.">
        <title>Analysis of a fungus-specific transcription factor family, the Candida albicans zinc cluster proteins, by artificial activation.</title>
        <authorList>
            <person name="Schillig R."/>
            <person name="Morschhauser J."/>
        </authorList>
    </citation>
    <scope>FUNCTION</scope>
    <scope>DISRUPTION PHENOTYPE</scope>
</reference>
<comment type="function">
    <text evidence="3 4 5">Transcription factor that controls the expression of CDR1, the major multidrug efflux pump. Required for yeast cell adherence to silicone substrate and plays a role in virulence.</text>
</comment>
<comment type="subcellular location">
    <subcellularLocation>
        <location evidence="2">Nucleus</location>
    </subcellularLocation>
    <subcellularLocation>
        <location evidence="1">Membrane</location>
        <topology evidence="1">Multi-pass membrane protein</topology>
    </subcellularLocation>
</comment>
<comment type="disruption phenotype">
    <text evidence="3 4 5">Leads to increased drug susceptibility. Displays decreased colonization of mouse kidneys. Shows decreased yeast cell adherence to silicone substrate.</text>
</comment>
<name>MRR2_CANAL</name>
<keyword id="KW-0010">Activator</keyword>
<keyword id="KW-0238">DNA-binding</keyword>
<keyword id="KW-0472">Membrane</keyword>
<keyword id="KW-0479">Metal-binding</keyword>
<keyword id="KW-0539">Nucleus</keyword>
<keyword id="KW-1185">Reference proteome</keyword>
<keyword id="KW-0804">Transcription</keyword>
<keyword id="KW-0805">Transcription regulation</keyword>
<keyword id="KW-0812">Transmembrane</keyword>
<keyword id="KW-1133">Transmembrane helix</keyword>
<keyword id="KW-0862">Zinc</keyword>
<proteinExistence type="inferred from homology"/>
<organism>
    <name type="scientific">Candida albicans (strain SC5314 / ATCC MYA-2876)</name>
    <name type="common">Yeast</name>
    <dbReference type="NCBI Taxonomy" id="237561"/>
    <lineage>
        <taxon>Eukaryota</taxon>
        <taxon>Fungi</taxon>
        <taxon>Dikarya</taxon>
        <taxon>Ascomycota</taxon>
        <taxon>Saccharomycotina</taxon>
        <taxon>Pichiomycetes</taxon>
        <taxon>Debaryomycetaceae</taxon>
        <taxon>Candida/Lodderomyces clade</taxon>
        <taxon>Candida</taxon>
    </lineage>
</organism>
<feature type="chain" id="PRO_0000431800" description="multidrug resistance regulator 2">
    <location>
        <begin position="1"/>
        <end position="710"/>
    </location>
</feature>
<feature type="transmembrane region" description="Helical; Name=1" evidence="1">
    <location>
        <begin position="475"/>
        <end position="495"/>
    </location>
</feature>
<feature type="transmembrane region" description="Helical; Name=2" evidence="1">
    <location>
        <begin position="525"/>
        <end position="545"/>
    </location>
</feature>
<feature type="DNA-binding region" description="Zn(2)-C6 fungal-type" evidence="2">
    <location>
        <begin position="11"/>
        <end position="37"/>
    </location>
</feature>
<sequence>MTKRDRTIYSCDACRSRKIKCNRQTPCASCHKSKRDCVYTVSRQRDAQITNRKLDKKTYHQISAIEKKISALEGKKGLLQVETINFNKSFTDQTPLVELQSLFPYLLLSKQDPGCVLVRHHCHHLLEKDPRYFEYSQLLADLSLTKRHHLTARAKALLGEAYIPSPQEGHTIDQLKHVLSLNPNFRFAGNFADPLTSFFSLIPPAWANKQLVDTFFQHIYPVIPIIDETDFNTSINRVLGPQIDGHYINSFPSIGSADDLPFLALFLLVLRISYMYTPGACPVSYDTLRAAETIMKEFDITKTHSLTALQAEIMLRFYKIVAPESYTQSNYVQVSVGVLIQNCYSLALHRDPEYIGEHNPKQQHLRRKIWHLLLRMEVIDSAIFQTILSSNPDASDTKLPQLIDQAPPMEQSIVKHIWRSTDLFVSLRKLVEINSKTSEDTPLETVLELLVEVETKLQAFLATIDSEASTVFYNDLVIFSVNFLLVYMYYSLYLFKGPTPLGNKYLLKSAQILFVDLARTRSTSLFLAYFNLNYIHLVLMITNFLRMRVDCIIHRHLRAQDSSVQDLQCCRYFLKIIFFSHVKELGNYSSSHKYAWQMRKVYLTLAKIMERSSDVLISNDPELVKSAAVDIPVKEINKLLEQYINFKGFTPTTLFDPTDNELIDEMQHENLWNAMENIEYSEKVYSGWIDAIKNVPSNWDWDYWDFLKIS</sequence>